<organism>
    <name type="scientific">Janthinobacterium sp. (strain Marseille)</name>
    <name type="common">Minibacterium massiliensis</name>
    <dbReference type="NCBI Taxonomy" id="375286"/>
    <lineage>
        <taxon>Bacteria</taxon>
        <taxon>Pseudomonadati</taxon>
        <taxon>Pseudomonadota</taxon>
        <taxon>Betaproteobacteria</taxon>
        <taxon>Burkholderiales</taxon>
        <taxon>Oxalobacteraceae</taxon>
        <taxon>Janthinobacterium</taxon>
    </lineage>
</organism>
<protein>
    <recommendedName>
        <fullName evidence="2">Translation initiation factor IF-2</fullName>
    </recommendedName>
</protein>
<sequence>MASNNVAQFATELKMPADVLLTQLRDAGVEKSSTSDELSKADKDKLLDHLRRAHGVAPDGEKKKITLTRKETTEIKQADATGKSRTIQVEVRKKRTFVKRDESTPEEAPVKAAAPVIDEAEIERRAEEARRQAELIARQEADLREKQERLAKLEAEKEAQAKALKQAEQAEAEAQKADAAKPVEAKADESAQEEKKRVAAEESKKKAAQLAKDAAKEASEKAVATEAARKAVADEVAQIKAMMNAPRRAIKAPEPAAPVAAKPAEGTLHKPADKKAGEKKDEKKPAVTADKKSIKSANVSSTWQDDAKKRGAGIKTRGNTGGGRDGWRAGPKGRRPSHHDDRESNFQAPTEAVVKDVHVPETITVAELAHKMSVKASEVIKHLMKLGQMCTINQVLDQETAMILVEEMGHTAHAAKLDDPEALLEQGEEHADIEALPRAPVVTVMGHVDHGKTSLLDYIRRAKVASGEAGGITQHIGAYHVETPRGMITFLDTPGHEAFTAMRARGAKATDIVILVVAADDGVMPQTKEAIAHAKAAGVPLVVAINKIDKPGANMDRVKQELIAEQVVPEEYGGDSPFVPVSAKTGEGIDALLEQVLLQAEVLELKAPVDAPARGLVVEAKLDKGRGPVATILVQSGTLKRGDVVLAGSAYGRVRAMLDENGKSITEAGPSIPVEIQGLTEVPNAGEEVMVMADERKAREIGLFRQGKFRDVKLAKQQAAKLENMFENMGEGEVKNLPMIIKTDVQGSQEALVGSLQKLSTSEVRVQVVHAAVGGISESDVNLAVASKAVIIGFNTRADASARKLAEANGVDIRYYNIIYDAVDEIKAAMSGMLAPEKREQALGLVEIRQVILVSKVGAIAGCYVLEGVAKRGSSVRLLRDNVVVWTGELDSLKRFKDDVKEVKAGFECGLTLKNFNDIKEGDQLEVFEVQEIARTL</sequence>
<keyword id="KW-0963">Cytoplasm</keyword>
<keyword id="KW-0342">GTP-binding</keyword>
<keyword id="KW-0396">Initiation factor</keyword>
<keyword id="KW-0547">Nucleotide-binding</keyword>
<keyword id="KW-0648">Protein biosynthesis</keyword>
<dbReference type="EMBL" id="CP000269">
    <property type="protein sequence ID" value="ABR89281.1"/>
    <property type="molecule type" value="Genomic_DNA"/>
</dbReference>
<dbReference type="RefSeq" id="WP_012080348.1">
    <property type="nucleotide sequence ID" value="NC_009659.1"/>
</dbReference>
<dbReference type="SMR" id="A6T0Y8"/>
<dbReference type="STRING" id="375286.mma_2495"/>
<dbReference type="KEGG" id="mms:mma_2495"/>
<dbReference type="eggNOG" id="COG0532">
    <property type="taxonomic scope" value="Bacteria"/>
</dbReference>
<dbReference type="HOGENOM" id="CLU_006301_6_0_4"/>
<dbReference type="OrthoDB" id="9811804at2"/>
<dbReference type="Proteomes" id="UP000006388">
    <property type="component" value="Chromosome"/>
</dbReference>
<dbReference type="GO" id="GO:0005829">
    <property type="term" value="C:cytosol"/>
    <property type="evidence" value="ECO:0007669"/>
    <property type="project" value="TreeGrafter"/>
</dbReference>
<dbReference type="GO" id="GO:0005525">
    <property type="term" value="F:GTP binding"/>
    <property type="evidence" value="ECO:0007669"/>
    <property type="project" value="UniProtKB-KW"/>
</dbReference>
<dbReference type="GO" id="GO:0003924">
    <property type="term" value="F:GTPase activity"/>
    <property type="evidence" value="ECO:0007669"/>
    <property type="project" value="UniProtKB-UniRule"/>
</dbReference>
<dbReference type="GO" id="GO:0097216">
    <property type="term" value="F:guanosine tetraphosphate binding"/>
    <property type="evidence" value="ECO:0007669"/>
    <property type="project" value="UniProtKB-ARBA"/>
</dbReference>
<dbReference type="GO" id="GO:0003743">
    <property type="term" value="F:translation initiation factor activity"/>
    <property type="evidence" value="ECO:0007669"/>
    <property type="project" value="UniProtKB-UniRule"/>
</dbReference>
<dbReference type="CDD" id="cd01887">
    <property type="entry name" value="IF2_eIF5B"/>
    <property type="match status" value="1"/>
</dbReference>
<dbReference type="CDD" id="cd03702">
    <property type="entry name" value="IF2_mtIF2_II"/>
    <property type="match status" value="1"/>
</dbReference>
<dbReference type="CDD" id="cd03692">
    <property type="entry name" value="mtIF2_IVc"/>
    <property type="match status" value="1"/>
</dbReference>
<dbReference type="FunFam" id="2.40.30.10:FF:000007">
    <property type="entry name" value="Translation initiation factor IF-2"/>
    <property type="match status" value="1"/>
</dbReference>
<dbReference type="FunFam" id="2.40.30.10:FF:000008">
    <property type="entry name" value="Translation initiation factor IF-2"/>
    <property type="match status" value="1"/>
</dbReference>
<dbReference type="FunFam" id="3.40.50.10050:FF:000001">
    <property type="entry name" value="Translation initiation factor IF-2"/>
    <property type="match status" value="1"/>
</dbReference>
<dbReference type="FunFam" id="3.40.50.300:FF:000019">
    <property type="entry name" value="Translation initiation factor IF-2"/>
    <property type="match status" value="1"/>
</dbReference>
<dbReference type="Gene3D" id="3.40.50.300">
    <property type="entry name" value="P-loop containing nucleotide triphosphate hydrolases"/>
    <property type="match status" value="1"/>
</dbReference>
<dbReference type="Gene3D" id="3.30.56.50">
    <property type="entry name" value="Putative DNA-binding domain, N-terminal subdomain of bacterial translation initiation factor IF2"/>
    <property type="match status" value="1"/>
</dbReference>
<dbReference type="Gene3D" id="2.40.30.10">
    <property type="entry name" value="Translation factors"/>
    <property type="match status" value="2"/>
</dbReference>
<dbReference type="Gene3D" id="3.40.50.10050">
    <property type="entry name" value="Translation initiation factor IF- 2, domain 3"/>
    <property type="match status" value="1"/>
</dbReference>
<dbReference type="HAMAP" id="MF_00100_B">
    <property type="entry name" value="IF_2_B"/>
    <property type="match status" value="1"/>
</dbReference>
<dbReference type="InterPro" id="IPR009061">
    <property type="entry name" value="DNA-bd_dom_put_sf"/>
</dbReference>
<dbReference type="InterPro" id="IPR053905">
    <property type="entry name" value="EF-G-like_DII"/>
</dbReference>
<dbReference type="InterPro" id="IPR004161">
    <property type="entry name" value="EFTu-like_2"/>
</dbReference>
<dbReference type="InterPro" id="IPR013575">
    <property type="entry name" value="IF2_assoc_dom_bac"/>
</dbReference>
<dbReference type="InterPro" id="IPR044145">
    <property type="entry name" value="IF2_II"/>
</dbReference>
<dbReference type="InterPro" id="IPR006847">
    <property type="entry name" value="IF2_N"/>
</dbReference>
<dbReference type="InterPro" id="IPR027417">
    <property type="entry name" value="P-loop_NTPase"/>
</dbReference>
<dbReference type="InterPro" id="IPR005225">
    <property type="entry name" value="Small_GTP-bd"/>
</dbReference>
<dbReference type="InterPro" id="IPR000795">
    <property type="entry name" value="T_Tr_GTP-bd_dom"/>
</dbReference>
<dbReference type="InterPro" id="IPR000178">
    <property type="entry name" value="TF_IF2_bacterial-like"/>
</dbReference>
<dbReference type="InterPro" id="IPR015760">
    <property type="entry name" value="TIF_IF2"/>
</dbReference>
<dbReference type="InterPro" id="IPR023115">
    <property type="entry name" value="TIF_IF2_dom3"/>
</dbReference>
<dbReference type="InterPro" id="IPR036925">
    <property type="entry name" value="TIF_IF2_dom3_sf"/>
</dbReference>
<dbReference type="InterPro" id="IPR009000">
    <property type="entry name" value="Transl_B-barrel_sf"/>
</dbReference>
<dbReference type="NCBIfam" id="TIGR00487">
    <property type="entry name" value="IF-2"/>
    <property type="match status" value="1"/>
</dbReference>
<dbReference type="NCBIfam" id="TIGR00231">
    <property type="entry name" value="small_GTP"/>
    <property type="match status" value="1"/>
</dbReference>
<dbReference type="PANTHER" id="PTHR43381:SF5">
    <property type="entry name" value="TR-TYPE G DOMAIN-CONTAINING PROTEIN"/>
    <property type="match status" value="1"/>
</dbReference>
<dbReference type="PANTHER" id="PTHR43381">
    <property type="entry name" value="TRANSLATION INITIATION FACTOR IF-2-RELATED"/>
    <property type="match status" value="1"/>
</dbReference>
<dbReference type="Pfam" id="PF22042">
    <property type="entry name" value="EF-G_D2"/>
    <property type="match status" value="1"/>
</dbReference>
<dbReference type="Pfam" id="PF00009">
    <property type="entry name" value="GTP_EFTU"/>
    <property type="match status" value="1"/>
</dbReference>
<dbReference type="Pfam" id="PF03144">
    <property type="entry name" value="GTP_EFTU_D2"/>
    <property type="match status" value="1"/>
</dbReference>
<dbReference type="Pfam" id="PF11987">
    <property type="entry name" value="IF-2"/>
    <property type="match status" value="1"/>
</dbReference>
<dbReference type="Pfam" id="PF08364">
    <property type="entry name" value="IF2_assoc"/>
    <property type="match status" value="1"/>
</dbReference>
<dbReference type="Pfam" id="PF04760">
    <property type="entry name" value="IF2_N"/>
    <property type="match status" value="2"/>
</dbReference>
<dbReference type="SUPFAM" id="SSF52156">
    <property type="entry name" value="Initiation factor IF2/eIF5b, domain 3"/>
    <property type="match status" value="1"/>
</dbReference>
<dbReference type="SUPFAM" id="SSF52540">
    <property type="entry name" value="P-loop containing nucleoside triphosphate hydrolases"/>
    <property type="match status" value="1"/>
</dbReference>
<dbReference type="SUPFAM" id="SSF46955">
    <property type="entry name" value="Putative DNA-binding domain"/>
    <property type="match status" value="1"/>
</dbReference>
<dbReference type="SUPFAM" id="SSF50447">
    <property type="entry name" value="Translation proteins"/>
    <property type="match status" value="2"/>
</dbReference>
<dbReference type="PROSITE" id="PS51722">
    <property type="entry name" value="G_TR_2"/>
    <property type="match status" value="1"/>
</dbReference>
<dbReference type="PROSITE" id="PS01176">
    <property type="entry name" value="IF2"/>
    <property type="match status" value="1"/>
</dbReference>
<comment type="function">
    <text evidence="2">One of the essential components for the initiation of protein synthesis. Protects formylmethionyl-tRNA from spontaneous hydrolysis and promotes its binding to the 30S ribosomal subunits. Also involved in the hydrolysis of GTP during the formation of the 70S ribosomal complex.</text>
</comment>
<comment type="subcellular location">
    <subcellularLocation>
        <location evidence="2">Cytoplasm</location>
    </subcellularLocation>
</comment>
<comment type="similarity">
    <text evidence="2">Belongs to the TRAFAC class translation factor GTPase superfamily. Classic translation factor GTPase family. IF-2 subfamily.</text>
</comment>
<name>IF2_JANMA</name>
<feature type="chain" id="PRO_1000008255" description="Translation initiation factor IF-2">
    <location>
        <begin position="1"/>
        <end position="937"/>
    </location>
</feature>
<feature type="domain" description="tr-type G">
    <location>
        <begin position="437"/>
        <end position="606"/>
    </location>
</feature>
<feature type="region of interest" description="Disordered" evidence="3">
    <location>
        <begin position="157"/>
        <end position="230"/>
    </location>
</feature>
<feature type="region of interest" description="Disordered" evidence="3">
    <location>
        <begin position="250"/>
        <end position="346"/>
    </location>
</feature>
<feature type="region of interest" description="G1" evidence="1">
    <location>
        <begin position="446"/>
        <end position="453"/>
    </location>
</feature>
<feature type="region of interest" description="G2" evidence="1">
    <location>
        <begin position="471"/>
        <end position="475"/>
    </location>
</feature>
<feature type="region of interest" description="G3" evidence="1">
    <location>
        <begin position="492"/>
        <end position="495"/>
    </location>
</feature>
<feature type="region of interest" description="G4" evidence="1">
    <location>
        <begin position="546"/>
        <end position="549"/>
    </location>
</feature>
<feature type="region of interest" description="G5" evidence="1">
    <location>
        <begin position="582"/>
        <end position="584"/>
    </location>
</feature>
<feature type="compositionally biased region" description="Basic and acidic residues" evidence="3">
    <location>
        <begin position="173"/>
        <end position="205"/>
    </location>
</feature>
<feature type="compositionally biased region" description="Low complexity" evidence="3">
    <location>
        <begin position="252"/>
        <end position="265"/>
    </location>
</feature>
<feature type="compositionally biased region" description="Basic and acidic residues" evidence="3">
    <location>
        <begin position="267"/>
        <end position="293"/>
    </location>
</feature>
<feature type="compositionally biased region" description="Polar residues" evidence="3">
    <location>
        <begin position="295"/>
        <end position="304"/>
    </location>
</feature>
<feature type="binding site" evidence="2">
    <location>
        <begin position="446"/>
        <end position="453"/>
    </location>
    <ligand>
        <name>GTP</name>
        <dbReference type="ChEBI" id="CHEBI:37565"/>
    </ligand>
</feature>
<feature type="binding site" evidence="2">
    <location>
        <begin position="492"/>
        <end position="496"/>
    </location>
    <ligand>
        <name>GTP</name>
        <dbReference type="ChEBI" id="CHEBI:37565"/>
    </ligand>
</feature>
<feature type="binding site" evidence="2">
    <location>
        <begin position="546"/>
        <end position="549"/>
    </location>
    <ligand>
        <name>GTP</name>
        <dbReference type="ChEBI" id="CHEBI:37565"/>
    </ligand>
</feature>
<gene>
    <name evidence="2" type="primary">infB</name>
    <name type="ordered locus">mma_2495</name>
</gene>
<proteinExistence type="inferred from homology"/>
<evidence type="ECO:0000250" key="1"/>
<evidence type="ECO:0000255" key="2">
    <source>
        <dbReference type="HAMAP-Rule" id="MF_00100"/>
    </source>
</evidence>
<evidence type="ECO:0000256" key="3">
    <source>
        <dbReference type="SAM" id="MobiDB-lite"/>
    </source>
</evidence>
<accession>A6T0Y8</accession>
<reference key="1">
    <citation type="journal article" date="2007" name="PLoS Genet.">
        <title>Genome analysis of Minibacterium massiliensis highlights the convergent evolution of water-living bacteria.</title>
        <authorList>
            <person name="Audic S."/>
            <person name="Robert C."/>
            <person name="Campagna B."/>
            <person name="Parinello H."/>
            <person name="Claverie J.-M."/>
            <person name="Raoult D."/>
            <person name="Drancourt M."/>
        </authorList>
    </citation>
    <scope>NUCLEOTIDE SEQUENCE [LARGE SCALE GENOMIC DNA]</scope>
    <source>
        <strain>Marseille</strain>
    </source>
</reference>